<gene>
    <name evidence="1" type="primary">tsf</name>
    <name type="ordered locus">lhv_2934</name>
</gene>
<proteinExistence type="inferred from homology"/>
<keyword id="KW-0963">Cytoplasm</keyword>
<keyword id="KW-0251">Elongation factor</keyword>
<keyword id="KW-0648">Protein biosynthesis</keyword>
<feature type="chain" id="PRO_1000071123" description="Elongation factor Ts">
    <location>
        <begin position="1"/>
        <end position="341"/>
    </location>
</feature>
<feature type="region of interest" description="Involved in Mg(2+) ion dislocation from EF-Tu" evidence="1">
    <location>
        <begin position="80"/>
        <end position="83"/>
    </location>
</feature>
<sequence>MAQITAKLVKELRERTGAGVMDAKKALVEVDGDMDKAIQYLRDKGMAKAAKKADRVAAEGLTGVYVNGNVAAITEVNSETDFVSSNDKFVNLVKDATKTIAEGQPADMEAAKKLKMDDGSTLDQAFVNATATIGEKIVLRRFALEKKNDDQEFGAYQHNGGQIGVITVLEGADAATAKHLAMHIAAMKPKVISPEELDDQFITDQLAVMNHKIDQDNESRALVHKKPLPHLVYGSEKQLTDDVLAKAKEDIKAELKEEGKPEKIWDRIIPGKMQRFIDDNTQVDKHFAVLSQDYIMDDSKTVGEFLKEKGAKLVAFQRFEVGEGIEKKQEDFAAEVREQMK</sequence>
<name>EFTS_LACH4</name>
<evidence type="ECO:0000255" key="1">
    <source>
        <dbReference type="HAMAP-Rule" id="MF_00050"/>
    </source>
</evidence>
<organism>
    <name type="scientific">Lactobacillus helveticus (strain DPC 4571)</name>
    <dbReference type="NCBI Taxonomy" id="405566"/>
    <lineage>
        <taxon>Bacteria</taxon>
        <taxon>Bacillati</taxon>
        <taxon>Bacillota</taxon>
        <taxon>Bacilli</taxon>
        <taxon>Lactobacillales</taxon>
        <taxon>Lactobacillaceae</taxon>
        <taxon>Lactobacillus</taxon>
    </lineage>
</organism>
<protein>
    <recommendedName>
        <fullName evidence="1">Elongation factor Ts</fullName>
        <shortName evidence="1">EF-Ts</shortName>
    </recommendedName>
</protein>
<comment type="function">
    <text evidence="1">Associates with the EF-Tu.GDP complex and induces the exchange of GDP to GTP. It remains bound to the aminoacyl-tRNA.EF-Tu.GTP complex up to the GTP hydrolysis stage on the ribosome.</text>
</comment>
<comment type="subcellular location">
    <subcellularLocation>
        <location evidence="1">Cytoplasm</location>
    </subcellularLocation>
</comment>
<comment type="similarity">
    <text evidence="1">Belongs to the EF-Ts family.</text>
</comment>
<reference key="1">
    <citation type="journal article" date="2008" name="J. Bacteriol.">
        <title>Genome sequence of Lactobacillus helveticus: an organism distinguished by selective gene loss and IS element expansion.</title>
        <authorList>
            <person name="Callanan M."/>
            <person name="Kaleta P."/>
            <person name="O'Callaghan J."/>
            <person name="O'Sullivan O."/>
            <person name="Jordan K."/>
            <person name="McAuliffe O."/>
            <person name="Sangrador-Vegas A."/>
            <person name="Slattery L."/>
            <person name="Fitzgerald G.F."/>
            <person name="Beresford T."/>
            <person name="Ross R.P."/>
        </authorList>
    </citation>
    <scope>NUCLEOTIDE SEQUENCE [LARGE SCALE GENOMIC DNA]</scope>
    <source>
        <strain>DPC 4571</strain>
    </source>
</reference>
<accession>A8YVR8</accession>
<dbReference type="EMBL" id="CP000517">
    <property type="protein sequence ID" value="ABX27897.1"/>
    <property type="molecule type" value="Genomic_DNA"/>
</dbReference>
<dbReference type="RefSeq" id="WP_003627529.1">
    <property type="nucleotide sequence ID" value="NC_010080.1"/>
</dbReference>
<dbReference type="SMR" id="A8YVR8"/>
<dbReference type="KEGG" id="lhe:lhv_2934"/>
<dbReference type="eggNOG" id="COG0264">
    <property type="taxonomic scope" value="Bacteria"/>
</dbReference>
<dbReference type="HOGENOM" id="CLU_047155_0_1_9"/>
<dbReference type="Proteomes" id="UP000000790">
    <property type="component" value="Chromosome"/>
</dbReference>
<dbReference type="GO" id="GO:0005737">
    <property type="term" value="C:cytoplasm"/>
    <property type="evidence" value="ECO:0007669"/>
    <property type="project" value="UniProtKB-SubCell"/>
</dbReference>
<dbReference type="GO" id="GO:0003746">
    <property type="term" value="F:translation elongation factor activity"/>
    <property type="evidence" value="ECO:0007669"/>
    <property type="project" value="UniProtKB-UniRule"/>
</dbReference>
<dbReference type="CDD" id="cd14275">
    <property type="entry name" value="UBA_EF-Ts"/>
    <property type="match status" value="1"/>
</dbReference>
<dbReference type="FunFam" id="1.10.286.20:FF:000004">
    <property type="entry name" value="Elongation factor Ts"/>
    <property type="match status" value="1"/>
</dbReference>
<dbReference type="FunFam" id="1.10.8.10:FF:000001">
    <property type="entry name" value="Elongation factor Ts"/>
    <property type="match status" value="1"/>
</dbReference>
<dbReference type="Gene3D" id="1.10.286.20">
    <property type="match status" value="1"/>
</dbReference>
<dbReference type="Gene3D" id="1.10.8.10">
    <property type="entry name" value="DNA helicase RuvA subunit, C-terminal domain"/>
    <property type="match status" value="1"/>
</dbReference>
<dbReference type="Gene3D" id="3.30.479.20">
    <property type="entry name" value="Elongation factor Ts, dimerisation domain"/>
    <property type="match status" value="2"/>
</dbReference>
<dbReference type="HAMAP" id="MF_00050">
    <property type="entry name" value="EF_Ts"/>
    <property type="match status" value="1"/>
</dbReference>
<dbReference type="InterPro" id="IPR036402">
    <property type="entry name" value="EF-Ts_dimer_sf"/>
</dbReference>
<dbReference type="InterPro" id="IPR001816">
    <property type="entry name" value="Transl_elong_EFTs/EF1B"/>
</dbReference>
<dbReference type="InterPro" id="IPR014039">
    <property type="entry name" value="Transl_elong_EFTs/EF1B_dimer"/>
</dbReference>
<dbReference type="InterPro" id="IPR018101">
    <property type="entry name" value="Transl_elong_Ts_CS"/>
</dbReference>
<dbReference type="InterPro" id="IPR009060">
    <property type="entry name" value="UBA-like_sf"/>
</dbReference>
<dbReference type="NCBIfam" id="TIGR00116">
    <property type="entry name" value="tsf"/>
    <property type="match status" value="1"/>
</dbReference>
<dbReference type="PANTHER" id="PTHR11741">
    <property type="entry name" value="ELONGATION FACTOR TS"/>
    <property type="match status" value="1"/>
</dbReference>
<dbReference type="PANTHER" id="PTHR11741:SF0">
    <property type="entry name" value="ELONGATION FACTOR TS, MITOCHONDRIAL"/>
    <property type="match status" value="1"/>
</dbReference>
<dbReference type="Pfam" id="PF00889">
    <property type="entry name" value="EF_TS"/>
    <property type="match status" value="2"/>
</dbReference>
<dbReference type="SUPFAM" id="SSF54713">
    <property type="entry name" value="Elongation factor Ts (EF-Ts), dimerisation domain"/>
    <property type="match status" value="3"/>
</dbReference>
<dbReference type="SUPFAM" id="SSF46934">
    <property type="entry name" value="UBA-like"/>
    <property type="match status" value="1"/>
</dbReference>
<dbReference type="PROSITE" id="PS01126">
    <property type="entry name" value="EF_TS_1"/>
    <property type="match status" value="1"/>
</dbReference>
<dbReference type="PROSITE" id="PS01127">
    <property type="entry name" value="EF_TS_2"/>
    <property type="match status" value="1"/>
</dbReference>